<sequence length="484" mass="49637">MSTPPLPDELRRVHMVGIGGAGMSGIARILLDRGAMVSGSDAKESRAVVALRARGAAIRIGHDASSLDLLPGGPTAVVTTHAAIPKTNPELVEARRRAIPIVLRPVVLAKLMAGHTTLMVTGTHGKTTTTSMLIVALQHCGFDPSFAVGGDLGEAGTNAHHGSGECFVAEADESDGSLLEYTPDVAVVTNIEADHLDFFGSAEAYTAVFDAFVERLTPGGALIACVDDPGSAALAERTAALGVRVLRYGSAGGRDLAGALVGWEQQGTGAVAHIQLAGESAPRAMRLSVPGRHMALNALGALLAALQVGADPDTVLDGLAGFEGVRRRFELVGTATGVRVFDDYAHHPTEVAATLAALRAVTDQAGDGRAVVVFQPHLYSRTETFAREFGAALSAADLVFVLDVYGAREQPIAGVSGASIVEHVGVPVTYVPDFSAVAAQVAGAVRPGDVVVTMGAGDVTMLGPEIIAALQARANRTVPGAGAR</sequence>
<gene>
    <name evidence="1" type="primary">murC</name>
    <name type="ordered locus">Mmcs_3255</name>
</gene>
<protein>
    <recommendedName>
        <fullName evidence="1">UDP-N-acetylmuramate--L-alanine ligase</fullName>
        <ecNumber evidence="1">6.3.2.8</ecNumber>
    </recommendedName>
    <alternativeName>
        <fullName evidence="1">UDP-N-acetylmuramoyl-L-alanine synthetase</fullName>
    </alternativeName>
</protein>
<feature type="chain" id="PRO_1000004375" description="UDP-N-acetylmuramate--L-alanine ligase">
    <location>
        <begin position="1"/>
        <end position="484"/>
    </location>
</feature>
<feature type="binding site" evidence="1">
    <location>
        <begin position="122"/>
        <end position="128"/>
    </location>
    <ligand>
        <name>ATP</name>
        <dbReference type="ChEBI" id="CHEBI:30616"/>
    </ligand>
</feature>
<proteinExistence type="inferred from homology"/>
<keyword id="KW-0067">ATP-binding</keyword>
<keyword id="KW-0131">Cell cycle</keyword>
<keyword id="KW-0132">Cell division</keyword>
<keyword id="KW-0133">Cell shape</keyword>
<keyword id="KW-0961">Cell wall biogenesis/degradation</keyword>
<keyword id="KW-0963">Cytoplasm</keyword>
<keyword id="KW-0436">Ligase</keyword>
<keyword id="KW-0547">Nucleotide-binding</keyword>
<keyword id="KW-0573">Peptidoglycan synthesis</keyword>
<name>MURC_MYCSS</name>
<organism>
    <name type="scientific">Mycobacterium sp. (strain MCS)</name>
    <dbReference type="NCBI Taxonomy" id="164756"/>
    <lineage>
        <taxon>Bacteria</taxon>
        <taxon>Bacillati</taxon>
        <taxon>Actinomycetota</taxon>
        <taxon>Actinomycetes</taxon>
        <taxon>Mycobacteriales</taxon>
        <taxon>Mycobacteriaceae</taxon>
        <taxon>Mycobacterium</taxon>
    </lineage>
</organism>
<dbReference type="EC" id="6.3.2.8" evidence="1"/>
<dbReference type="EMBL" id="CP000384">
    <property type="protein sequence ID" value="ABG09362.1"/>
    <property type="molecule type" value="Genomic_DNA"/>
</dbReference>
<dbReference type="SMR" id="Q1B6X2"/>
<dbReference type="KEGG" id="mmc:Mmcs_3255"/>
<dbReference type="HOGENOM" id="CLU_028104_2_1_11"/>
<dbReference type="BioCyc" id="MSP164756:G1G6O-3321-MONOMER"/>
<dbReference type="UniPathway" id="UPA00219"/>
<dbReference type="GO" id="GO:0005737">
    <property type="term" value="C:cytoplasm"/>
    <property type="evidence" value="ECO:0007669"/>
    <property type="project" value="UniProtKB-SubCell"/>
</dbReference>
<dbReference type="GO" id="GO:0005524">
    <property type="term" value="F:ATP binding"/>
    <property type="evidence" value="ECO:0007669"/>
    <property type="project" value="UniProtKB-UniRule"/>
</dbReference>
<dbReference type="GO" id="GO:0008763">
    <property type="term" value="F:UDP-N-acetylmuramate-L-alanine ligase activity"/>
    <property type="evidence" value="ECO:0007669"/>
    <property type="project" value="UniProtKB-UniRule"/>
</dbReference>
<dbReference type="GO" id="GO:0051301">
    <property type="term" value="P:cell division"/>
    <property type="evidence" value="ECO:0007669"/>
    <property type="project" value="UniProtKB-KW"/>
</dbReference>
<dbReference type="GO" id="GO:0071555">
    <property type="term" value="P:cell wall organization"/>
    <property type="evidence" value="ECO:0007669"/>
    <property type="project" value="UniProtKB-KW"/>
</dbReference>
<dbReference type="GO" id="GO:0009252">
    <property type="term" value="P:peptidoglycan biosynthetic process"/>
    <property type="evidence" value="ECO:0007669"/>
    <property type="project" value="UniProtKB-UniRule"/>
</dbReference>
<dbReference type="GO" id="GO:0008360">
    <property type="term" value="P:regulation of cell shape"/>
    <property type="evidence" value="ECO:0007669"/>
    <property type="project" value="UniProtKB-KW"/>
</dbReference>
<dbReference type="FunFam" id="3.40.50.720:FF:000046">
    <property type="entry name" value="UDP-N-acetylmuramate--L-alanine ligase"/>
    <property type="match status" value="1"/>
</dbReference>
<dbReference type="Gene3D" id="3.90.190.20">
    <property type="entry name" value="Mur ligase, C-terminal domain"/>
    <property type="match status" value="1"/>
</dbReference>
<dbReference type="Gene3D" id="3.40.1190.10">
    <property type="entry name" value="Mur-like, catalytic domain"/>
    <property type="match status" value="1"/>
</dbReference>
<dbReference type="Gene3D" id="3.40.50.720">
    <property type="entry name" value="NAD(P)-binding Rossmann-like Domain"/>
    <property type="match status" value="1"/>
</dbReference>
<dbReference type="HAMAP" id="MF_00046">
    <property type="entry name" value="MurC"/>
    <property type="match status" value="1"/>
</dbReference>
<dbReference type="InterPro" id="IPR036565">
    <property type="entry name" value="Mur-like_cat_sf"/>
</dbReference>
<dbReference type="InterPro" id="IPR004101">
    <property type="entry name" value="Mur_ligase_C"/>
</dbReference>
<dbReference type="InterPro" id="IPR036615">
    <property type="entry name" value="Mur_ligase_C_dom_sf"/>
</dbReference>
<dbReference type="InterPro" id="IPR013221">
    <property type="entry name" value="Mur_ligase_cen"/>
</dbReference>
<dbReference type="InterPro" id="IPR000713">
    <property type="entry name" value="Mur_ligase_N"/>
</dbReference>
<dbReference type="InterPro" id="IPR050061">
    <property type="entry name" value="MurCDEF_pg_biosynth"/>
</dbReference>
<dbReference type="InterPro" id="IPR005758">
    <property type="entry name" value="UDP-N-AcMur_Ala_ligase_MurC"/>
</dbReference>
<dbReference type="NCBIfam" id="TIGR01082">
    <property type="entry name" value="murC"/>
    <property type="match status" value="1"/>
</dbReference>
<dbReference type="PANTHER" id="PTHR43445:SF3">
    <property type="entry name" value="UDP-N-ACETYLMURAMATE--L-ALANINE LIGASE"/>
    <property type="match status" value="1"/>
</dbReference>
<dbReference type="PANTHER" id="PTHR43445">
    <property type="entry name" value="UDP-N-ACETYLMURAMATE--L-ALANINE LIGASE-RELATED"/>
    <property type="match status" value="1"/>
</dbReference>
<dbReference type="Pfam" id="PF01225">
    <property type="entry name" value="Mur_ligase"/>
    <property type="match status" value="1"/>
</dbReference>
<dbReference type="Pfam" id="PF02875">
    <property type="entry name" value="Mur_ligase_C"/>
    <property type="match status" value="1"/>
</dbReference>
<dbReference type="Pfam" id="PF08245">
    <property type="entry name" value="Mur_ligase_M"/>
    <property type="match status" value="1"/>
</dbReference>
<dbReference type="SUPFAM" id="SSF51984">
    <property type="entry name" value="MurCD N-terminal domain"/>
    <property type="match status" value="1"/>
</dbReference>
<dbReference type="SUPFAM" id="SSF53623">
    <property type="entry name" value="MurD-like peptide ligases, catalytic domain"/>
    <property type="match status" value="1"/>
</dbReference>
<dbReference type="SUPFAM" id="SSF53244">
    <property type="entry name" value="MurD-like peptide ligases, peptide-binding domain"/>
    <property type="match status" value="1"/>
</dbReference>
<comment type="function">
    <text evidence="1">Cell wall formation.</text>
</comment>
<comment type="catalytic activity">
    <reaction evidence="1">
        <text>UDP-N-acetyl-alpha-D-muramate + L-alanine + ATP = UDP-N-acetyl-alpha-D-muramoyl-L-alanine + ADP + phosphate + H(+)</text>
        <dbReference type="Rhea" id="RHEA:23372"/>
        <dbReference type="ChEBI" id="CHEBI:15378"/>
        <dbReference type="ChEBI" id="CHEBI:30616"/>
        <dbReference type="ChEBI" id="CHEBI:43474"/>
        <dbReference type="ChEBI" id="CHEBI:57972"/>
        <dbReference type="ChEBI" id="CHEBI:70757"/>
        <dbReference type="ChEBI" id="CHEBI:83898"/>
        <dbReference type="ChEBI" id="CHEBI:456216"/>
        <dbReference type="EC" id="6.3.2.8"/>
    </reaction>
</comment>
<comment type="pathway">
    <text evidence="1">Cell wall biogenesis; peptidoglycan biosynthesis.</text>
</comment>
<comment type="subcellular location">
    <subcellularLocation>
        <location evidence="1">Cytoplasm</location>
    </subcellularLocation>
</comment>
<comment type="similarity">
    <text evidence="1">Belongs to the MurCDEF family.</text>
</comment>
<evidence type="ECO:0000255" key="1">
    <source>
        <dbReference type="HAMAP-Rule" id="MF_00046"/>
    </source>
</evidence>
<accession>Q1B6X2</accession>
<reference key="1">
    <citation type="submission" date="2006-06" db="EMBL/GenBank/DDBJ databases">
        <title>Complete sequence of chromosome of Mycobacterium sp. MCS.</title>
        <authorList>
            <consortium name="US DOE Joint Genome Institute"/>
            <person name="Copeland A."/>
            <person name="Lucas S."/>
            <person name="Lapidus A."/>
            <person name="Barry K."/>
            <person name="Detter J.C."/>
            <person name="Glavina del Rio T."/>
            <person name="Hammon N."/>
            <person name="Israni S."/>
            <person name="Dalin E."/>
            <person name="Tice H."/>
            <person name="Pitluck S."/>
            <person name="Martinez M."/>
            <person name="Schmutz J."/>
            <person name="Larimer F."/>
            <person name="Land M."/>
            <person name="Hauser L."/>
            <person name="Kyrpides N."/>
            <person name="Kim E."/>
            <person name="Miller C.D."/>
            <person name="Hughes J.E."/>
            <person name="Anderson A.J."/>
            <person name="Sims R.C."/>
            <person name="Richardson P."/>
        </authorList>
    </citation>
    <scope>NUCLEOTIDE SEQUENCE [LARGE SCALE GENOMIC DNA]</scope>
    <source>
        <strain>MCS</strain>
    </source>
</reference>